<feature type="chain" id="PRO_0000222034" description="Probable capsid protein">
    <location>
        <begin position="1"/>
        <end position="494"/>
    </location>
</feature>
<feature type="zinc finger region" description="CCHC-type" evidence="2">
    <location>
        <begin position="418"/>
        <end position="435"/>
    </location>
</feature>
<feature type="region of interest" description="Disordered" evidence="3">
    <location>
        <begin position="474"/>
        <end position="494"/>
    </location>
</feature>
<feature type="short sequence motif" description="Nuclear localization signal" evidence="1">
    <location>
        <begin position="120"/>
        <end position="123"/>
    </location>
</feature>
<feature type="compositionally biased region" description="Acidic residues" evidence="3">
    <location>
        <begin position="479"/>
        <end position="494"/>
    </location>
</feature>
<proteinExistence type="inferred from homology"/>
<evidence type="ECO:0000250" key="1"/>
<evidence type="ECO:0000255" key="2">
    <source>
        <dbReference type="PROSITE-ProRule" id="PRU00047"/>
    </source>
</evidence>
<evidence type="ECO:0000256" key="3">
    <source>
        <dbReference type="SAM" id="MobiDB-lite"/>
    </source>
</evidence>
<evidence type="ECO:0000305" key="4"/>
<reference key="1">
    <citation type="journal article" date="1986" name="EMBO J.">
        <title>The sequence of carnation etched ring virus DNA: comparison with cauliflower mosaic virus and retroviruses.</title>
        <authorList>
            <person name="Hull R."/>
            <person name="Sadler J."/>
            <person name="Longstaff M."/>
        </authorList>
    </citation>
    <scope>NUCLEOTIDE SEQUENCE [GENOMIC DNA]</scope>
</reference>
<comment type="function">
    <text evidence="1">Self assembles to form an icosahedral capsid, about 50 nm in diameter, nm, composed of 420 subunits of the viral capsid protein. The capsid encapsulates the genomic dsDNA. Following virus entry into host cell, provides nuclear import of the viral genome. Virus particles do not enter the nucleus, but dock at the nuclear membrane through the interaction with host importins (By similarity).</text>
</comment>
<comment type="subunit">
    <text evidence="1">Interacts (via nuclear localization signal) with host importin alpha.</text>
</comment>
<comment type="subcellular location">
    <subcellularLocation>
        <location evidence="4">Virion</location>
    </subcellularLocation>
    <subcellularLocation>
        <location evidence="4">Host nucleus</location>
    </subcellularLocation>
</comment>
<comment type="similarity">
    <text evidence="4">Belongs to the caulimoviridae capsid protein family.</text>
</comment>
<accession>P05399</accession>
<organismHost>
    <name type="scientific">Dianthus caryophyllus</name>
    <name type="common">Carnation</name>
    <name type="synonym">Clove pink</name>
    <dbReference type="NCBI Taxonomy" id="3570"/>
</organismHost>
<protein>
    <recommendedName>
        <fullName>Probable capsid protein</fullName>
        <shortName>CP</shortName>
    </recommendedName>
    <alternativeName>
        <fullName>Coat protein</fullName>
    </alternativeName>
</protein>
<keyword id="KW-0167">Capsid protein</keyword>
<keyword id="KW-1048">Host nucleus</keyword>
<keyword id="KW-0479">Metal-binding</keyword>
<keyword id="KW-1185">Reference proteome</keyword>
<keyword id="KW-1145">T=7 icosahedral capsid protein</keyword>
<keyword id="KW-1163">Viral penetration into host nucleus</keyword>
<keyword id="KW-0946">Virion</keyword>
<keyword id="KW-1160">Virus entry into host cell</keyword>
<keyword id="KW-0862">Zinc</keyword>
<keyword id="KW-0863">Zinc-finger</keyword>
<organism>
    <name type="scientific">Carnation etched ring virus</name>
    <name type="common">CERV</name>
    <dbReference type="NCBI Taxonomy" id="10640"/>
    <lineage>
        <taxon>Viruses</taxon>
        <taxon>Riboviria</taxon>
        <taxon>Pararnavirae</taxon>
        <taxon>Artverviricota</taxon>
        <taxon>Revtraviricetes</taxon>
        <taxon>Ortervirales</taxon>
        <taxon>Caulimoviridae</taxon>
        <taxon>Caulimovirus</taxon>
        <taxon>Caulimovirus incidianthi</taxon>
    </lineage>
</organism>
<sequence length="494" mass="56886">MNREAILWKNINSIPEEPDLIKSLEVLSMEQNDRERELEHNLILNKQISEQIPEWIIPDSLSELSSGIDLNFVLEEQEVNDNNSQPSLEEEVVSESDVESMRSFNVAMNRGEVGESSNKRPKREPDLFTSFGKIREDIGDKNPSLNILNLDCVNSPSDRKNKIDKWAAELGLVFLTNPEAYTTAPNAARARLAYMEHKSLGIVNRFIKSTQWTQMNGDILLNVVSGLYTMFLGEDYTGNQEKTLEQERAKASLRLINLQLCDICSLQSFFCDYESNLYKLPQNEYPSLVKQYLAKIPIVGEKASKRFEEEASAATSYSLGFAHKLVNEELAKICELSKKQKKLKRFNKNCCSTFEKPYEYGCKPSYSKKKKYSKKYKPKYTKYKVIRKKKKFSPGKYFKPKDKKSEKAKYCPKGKKTCRCWVCNIEGHYANECPNRQTSEKFKLIQIAENYGLEPIENPYEDQQEICLLEQIQLSSSDSELDDTCEESSSEESE</sequence>
<gene>
    <name type="ORF">ORF IV</name>
</gene>
<name>CAPSD_CERV</name>
<dbReference type="EMBL" id="X04658">
    <property type="protein sequence ID" value="CAA28359.1"/>
    <property type="molecule type" value="Genomic_DNA"/>
</dbReference>
<dbReference type="PIR" id="S00853">
    <property type="entry name" value="VCCVCE"/>
</dbReference>
<dbReference type="RefSeq" id="NP_612576.1">
    <property type="nucleotide sequence ID" value="NC_003498.1"/>
</dbReference>
<dbReference type="SMR" id="P05399"/>
<dbReference type="KEGG" id="vg:935427"/>
<dbReference type="OrthoDB" id="16301at10239"/>
<dbReference type="Proteomes" id="UP000008446">
    <property type="component" value="Segment"/>
</dbReference>
<dbReference type="GO" id="GO:0043657">
    <property type="term" value="C:host cell"/>
    <property type="evidence" value="ECO:0007669"/>
    <property type="project" value="GOC"/>
</dbReference>
<dbReference type="GO" id="GO:0042025">
    <property type="term" value="C:host cell nucleus"/>
    <property type="evidence" value="ECO:0007669"/>
    <property type="project" value="UniProtKB-SubCell"/>
</dbReference>
<dbReference type="GO" id="GO:0039620">
    <property type="term" value="C:T=7 icosahedral viral capsid"/>
    <property type="evidence" value="ECO:0007669"/>
    <property type="project" value="UniProtKB-KW"/>
</dbReference>
<dbReference type="GO" id="GO:0003676">
    <property type="term" value="F:nucleic acid binding"/>
    <property type="evidence" value="ECO:0007669"/>
    <property type="project" value="InterPro"/>
</dbReference>
<dbReference type="GO" id="GO:0005198">
    <property type="term" value="F:structural molecule activity"/>
    <property type="evidence" value="ECO:0007669"/>
    <property type="project" value="InterPro"/>
</dbReference>
<dbReference type="GO" id="GO:0008270">
    <property type="term" value="F:zinc ion binding"/>
    <property type="evidence" value="ECO:0007669"/>
    <property type="project" value="UniProtKB-KW"/>
</dbReference>
<dbReference type="GO" id="GO:0046718">
    <property type="term" value="P:symbiont entry into host cell"/>
    <property type="evidence" value="ECO:0007669"/>
    <property type="project" value="UniProtKB-KW"/>
</dbReference>
<dbReference type="GO" id="GO:0075732">
    <property type="term" value="P:viral penetration into host nucleus"/>
    <property type="evidence" value="ECO:0007669"/>
    <property type="project" value="UniProtKB-KW"/>
</dbReference>
<dbReference type="InterPro" id="IPR001988">
    <property type="entry name" value="Caulimo_coat"/>
</dbReference>
<dbReference type="InterPro" id="IPR001878">
    <property type="entry name" value="Znf_CCHC"/>
</dbReference>
<dbReference type="InterPro" id="IPR036875">
    <property type="entry name" value="Znf_CCHC_sf"/>
</dbReference>
<dbReference type="Pfam" id="PF22909">
    <property type="entry name" value="Caulimovir_coat_dom"/>
    <property type="match status" value="1"/>
</dbReference>
<dbReference type="PRINTS" id="PR00221">
    <property type="entry name" value="CAULIMOCOAT"/>
</dbReference>
<dbReference type="SMART" id="SM00343">
    <property type="entry name" value="ZnF_C2HC"/>
    <property type="match status" value="1"/>
</dbReference>
<dbReference type="SUPFAM" id="SSF57756">
    <property type="entry name" value="Retrovirus zinc finger-like domains"/>
    <property type="match status" value="1"/>
</dbReference>
<dbReference type="PROSITE" id="PS50158">
    <property type="entry name" value="ZF_CCHC"/>
    <property type="match status" value="1"/>
</dbReference>